<proteinExistence type="inferred from homology"/>
<name>PXR1_ASPCL</name>
<feature type="chain" id="PRO_0000324878" description="Protein pxr1">
    <location>
        <begin position="1"/>
        <end position="291"/>
    </location>
</feature>
<feature type="domain" description="G-patch" evidence="2">
    <location>
        <begin position="25"/>
        <end position="79"/>
    </location>
</feature>
<feature type="region of interest" description="Disordered" evidence="3">
    <location>
        <begin position="1"/>
        <end position="26"/>
    </location>
</feature>
<feature type="region of interest" description="Disordered" evidence="3">
    <location>
        <begin position="146"/>
        <end position="268"/>
    </location>
</feature>
<feature type="compositionally biased region" description="Basic residues" evidence="3">
    <location>
        <begin position="1"/>
        <end position="11"/>
    </location>
</feature>
<feature type="compositionally biased region" description="Polar residues" evidence="3">
    <location>
        <begin position="15"/>
        <end position="25"/>
    </location>
</feature>
<feature type="compositionally biased region" description="Polar residues" evidence="3">
    <location>
        <begin position="146"/>
        <end position="156"/>
    </location>
</feature>
<feature type="compositionally biased region" description="Basic and acidic residues" evidence="3">
    <location>
        <begin position="194"/>
        <end position="205"/>
    </location>
</feature>
<feature type="compositionally biased region" description="Basic residues" evidence="3">
    <location>
        <begin position="206"/>
        <end position="219"/>
    </location>
</feature>
<feature type="compositionally biased region" description="Basic and acidic residues" evidence="3">
    <location>
        <begin position="230"/>
        <end position="247"/>
    </location>
</feature>
<dbReference type="EMBL" id="DS027051">
    <property type="protein sequence ID" value="EAW11783.1"/>
    <property type="status" value="ALT_SEQ"/>
    <property type="molecule type" value="Genomic_DNA"/>
</dbReference>
<dbReference type="RefSeq" id="XP_001273209.1">
    <property type="nucleotide sequence ID" value="XM_001273208.1"/>
</dbReference>
<dbReference type="SMR" id="A1CD56"/>
<dbReference type="STRING" id="344612.A1CD56"/>
<dbReference type="GeneID" id="4705616"/>
<dbReference type="KEGG" id="act:ACLA_005360"/>
<dbReference type="eggNOG" id="KOG2809">
    <property type="taxonomic scope" value="Eukaryota"/>
</dbReference>
<dbReference type="OrthoDB" id="264532at2759"/>
<dbReference type="Proteomes" id="UP000006701">
    <property type="component" value="Unassembled WGS sequence"/>
</dbReference>
<dbReference type="GO" id="GO:0005730">
    <property type="term" value="C:nucleolus"/>
    <property type="evidence" value="ECO:0007669"/>
    <property type="project" value="UniProtKB-SubCell"/>
</dbReference>
<dbReference type="GO" id="GO:0003676">
    <property type="term" value="F:nucleic acid binding"/>
    <property type="evidence" value="ECO:0007669"/>
    <property type="project" value="InterPro"/>
</dbReference>
<dbReference type="GO" id="GO:0006364">
    <property type="term" value="P:rRNA processing"/>
    <property type="evidence" value="ECO:0007669"/>
    <property type="project" value="UniProtKB-KW"/>
</dbReference>
<dbReference type="InterPro" id="IPR000467">
    <property type="entry name" value="G_patch_dom"/>
</dbReference>
<dbReference type="InterPro" id="IPR050656">
    <property type="entry name" value="PINX1"/>
</dbReference>
<dbReference type="PANTHER" id="PTHR23149">
    <property type="entry name" value="G PATCH DOMAIN CONTAINING PROTEIN"/>
    <property type="match status" value="1"/>
</dbReference>
<dbReference type="PANTHER" id="PTHR23149:SF31">
    <property type="entry name" value="PROTEIN PXR1"/>
    <property type="match status" value="1"/>
</dbReference>
<dbReference type="Pfam" id="PF01585">
    <property type="entry name" value="G-patch"/>
    <property type="match status" value="1"/>
</dbReference>
<dbReference type="PROSITE" id="PS50174">
    <property type="entry name" value="G_PATCH"/>
    <property type="match status" value="1"/>
</dbReference>
<gene>
    <name type="primary">pxr1</name>
    <name type="ORF">ACLA_005360</name>
</gene>
<reference key="1">
    <citation type="journal article" date="2008" name="PLoS Genet.">
        <title>Genomic islands in the pathogenic filamentous fungus Aspergillus fumigatus.</title>
        <authorList>
            <person name="Fedorova N.D."/>
            <person name="Khaldi N."/>
            <person name="Joardar V.S."/>
            <person name="Maiti R."/>
            <person name="Amedeo P."/>
            <person name="Anderson M.J."/>
            <person name="Crabtree J."/>
            <person name="Silva J.C."/>
            <person name="Badger J.H."/>
            <person name="Albarraq A."/>
            <person name="Angiuoli S."/>
            <person name="Bussey H."/>
            <person name="Bowyer P."/>
            <person name="Cotty P.J."/>
            <person name="Dyer P.S."/>
            <person name="Egan A."/>
            <person name="Galens K."/>
            <person name="Fraser-Liggett C.M."/>
            <person name="Haas B.J."/>
            <person name="Inman J.M."/>
            <person name="Kent R."/>
            <person name="Lemieux S."/>
            <person name="Malavazi I."/>
            <person name="Orvis J."/>
            <person name="Roemer T."/>
            <person name="Ronning C.M."/>
            <person name="Sundaram J.P."/>
            <person name="Sutton G."/>
            <person name="Turner G."/>
            <person name="Venter J.C."/>
            <person name="White O.R."/>
            <person name="Whitty B.R."/>
            <person name="Youngman P."/>
            <person name="Wolfe K.H."/>
            <person name="Goldman G.H."/>
            <person name="Wortman J.R."/>
            <person name="Jiang B."/>
            <person name="Denning D.W."/>
            <person name="Nierman W.C."/>
        </authorList>
    </citation>
    <scope>NUCLEOTIDE SEQUENCE [LARGE SCALE GENOMIC DNA]</scope>
    <source>
        <strain>ATCC 1007 / CBS 513.65 / DSM 816 / NCTC 3887 / NRRL 1 / QM 1276 / 107</strain>
    </source>
</reference>
<evidence type="ECO:0000250" key="1"/>
<evidence type="ECO:0000255" key="2">
    <source>
        <dbReference type="PROSITE-ProRule" id="PRU00092"/>
    </source>
</evidence>
<evidence type="ECO:0000256" key="3">
    <source>
        <dbReference type="SAM" id="MobiDB-lite"/>
    </source>
</evidence>
<evidence type="ECO:0000305" key="4"/>
<protein>
    <recommendedName>
        <fullName>Protein pxr1</fullName>
    </recommendedName>
    <alternativeName>
        <fullName>PinX1-related protein 1</fullName>
    </alternativeName>
</protein>
<organism>
    <name type="scientific">Aspergillus clavatus (strain ATCC 1007 / CBS 513.65 / DSM 816 / NCTC 3887 / NRRL 1 / QM 1276 / 107)</name>
    <dbReference type="NCBI Taxonomy" id="344612"/>
    <lineage>
        <taxon>Eukaryota</taxon>
        <taxon>Fungi</taxon>
        <taxon>Dikarya</taxon>
        <taxon>Ascomycota</taxon>
        <taxon>Pezizomycotina</taxon>
        <taxon>Eurotiomycetes</taxon>
        <taxon>Eurotiomycetidae</taxon>
        <taxon>Eurotiales</taxon>
        <taxon>Aspergillaceae</taxon>
        <taxon>Aspergillus</taxon>
        <taxon>Aspergillus subgen. Fumigati</taxon>
    </lineage>
</organism>
<accession>A1CD56</accession>
<sequence>MGLAAPRKRTKISHDPNNTTWSRSTDGFGHRILKAQGWTPGSFLGPRNAAHSDLFTTASASHIRVVLKDDNLGLGARPKRGLLDEPTGLDAFKGLLGRLNGKSETQLVVEQQKRDDIKLARYAAAKWQAVRFVSGGLLVQESNETLVPPTSQNGQADSEVKNVPQGREEGLADDETTNSDSEDRHSVEKRKKKETNSRGSREKERKREKRQMRRDKKRKTSESTESEAEMQEKTRVQGPSEDVKPTEPKAPTLSRERRPMGRQMFRGRYIAQKKRALMDDKSLNEIFMIST</sequence>
<keyword id="KW-0539">Nucleus</keyword>
<keyword id="KW-1185">Reference proteome</keyword>
<keyword id="KW-0690">Ribosome biogenesis</keyword>
<keyword id="KW-0698">rRNA processing</keyword>
<comment type="function">
    <text evidence="1">Involved in rRNA-processing at A0, A1 and A2 sites and negatively regulates telomerase.</text>
</comment>
<comment type="subcellular location">
    <subcellularLocation>
        <location evidence="1">Nucleus</location>
        <location evidence="1">Nucleolus</location>
    </subcellularLocation>
</comment>
<comment type="similarity">
    <text evidence="4">Belongs to the PINX1 family.</text>
</comment>
<comment type="sequence caution" evidence="4">
    <conflict type="erroneous gene model prediction">
        <sequence resource="EMBL-CDS" id="EAW11783"/>
    </conflict>
</comment>